<accession>Q2TL60</accession>
<accession>B2RUH6</accession>
<feature type="chain" id="PRO_0000251898" description="Zinc finger protein 667">
    <location>
        <begin position="1"/>
        <end position="609"/>
    </location>
</feature>
<feature type="domain" description="KRAB" evidence="2">
    <location>
        <begin position="14"/>
        <end position="85"/>
    </location>
</feature>
<feature type="zinc finger region" description="C2H2-type 1" evidence="1">
    <location>
        <begin position="144"/>
        <end position="166"/>
    </location>
</feature>
<feature type="zinc finger region" description="C2H2-type 2" evidence="1">
    <location>
        <begin position="172"/>
        <end position="194"/>
    </location>
</feature>
<feature type="zinc finger region" description="C2H2-type 3" evidence="1">
    <location>
        <begin position="200"/>
        <end position="222"/>
    </location>
</feature>
<feature type="zinc finger region" description="C2H2-type 4" evidence="1">
    <location>
        <begin position="253"/>
        <end position="275"/>
    </location>
</feature>
<feature type="zinc finger region" description="C2H2-type 5" evidence="1">
    <location>
        <begin position="329"/>
        <end position="351"/>
    </location>
</feature>
<feature type="zinc finger region" description="C2H2-type 6" evidence="1">
    <location>
        <begin position="357"/>
        <end position="379"/>
    </location>
</feature>
<feature type="zinc finger region" description="C2H2-type 7" evidence="1">
    <location>
        <begin position="385"/>
        <end position="407"/>
    </location>
</feature>
<feature type="zinc finger region" description="C2H2-type 8" evidence="1">
    <location>
        <begin position="414"/>
        <end position="436"/>
    </location>
</feature>
<feature type="zinc finger region" description="C2H2-type 9" evidence="1">
    <location>
        <begin position="442"/>
        <end position="464"/>
    </location>
</feature>
<feature type="zinc finger region" description="C2H2-type 10" evidence="1">
    <location>
        <begin position="470"/>
        <end position="492"/>
    </location>
</feature>
<feature type="zinc finger region" description="C2H2-type 11" evidence="1">
    <location>
        <begin position="498"/>
        <end position="520"/>
    </location>
</feature>
<feature type="zinc finger region" description="C2H2-type 12" evidence="1">
    <location>
        <begin position="526"/>
        <end position="548"/>
    </location>
</feature>
<feature type="zinc finger region" description="C2H2-type 13" evidence="1">
    <location>
        <begin position="554"/>
        <end position="576"/>
    </location>
</feature>
<feature type="zinc finger region" description="C2H2-type 14" evidence="1">
    <location>
        <begin position="582"/>
        <end position="604"/>
    </location>
</feature>
<feature type="region of interest" description="Disordered" evidence="3">
    <location>
        <begin position="81"/>
        <end position="140"/>
    </location>
</feature>
<feature type="compositionally biased region" description="Basic and acidic residues" evidence="3">
    <location>
        <begin position="81"/>
        <end position="94"/>
    </location>
</feature>
<proteinExistence type="evidence at transcript level"/>
<name>ZN667_MOUSE</name>
<gene>
    <name type="primary">Znf667</name>
    <name type="synonym">Mip1</name>
    <name type="synonym">Zfp667</name>
</gene>
<keyword id="KW-0238">DNA-binding</keyword>
<keyword id="KW-0479">Metal-binding</keyword>
<keyword id="KW-0539">Nucleus</keyword>
<keyword id="KW-1185">Reference proteome</keyword>
<keyword id="KW-0677">Repeat</keyword>
<keyword id="KW-0804">Transcription</keyword>
<keyword id="KW-0805">Transcription regulation</keyword>
<keyword id="KW-0862">Zinc</keyword>
<keyword id="KW-0863">Zinc-finger</keyword>
<protein>
    <recommendedName>
        <fullName>Zinc finger protein 667</fullName>
    </recommendedName>
    <alternativeName>
        <fullName>Myocardial ischemic preconditioning up-regulated protein 1</fullName>
    </alternativeName>
</protein>
<dbReference type="EMBL" id="AY850275">
    <property type="protein sequence ID" value="AAX45071.1"/>
    <property type="molecule type" value="mRNA"/>
</dbReference>
<dbReference type="EMBL" id="BC141152">
    <property type="protein sequence ID" value="AAI41153.1"/>
    <property type="molecule type" value="mRNA"/>
</dbReference>
<dbReference type="EMBL" id="BC141153">
    <property type="protein sequence ID" value="AAI41154.1"/>
    <property type="molecule type" value="mRNA"/>
</dbReference>
<dbReference type="CCDS" id="CCDS20773.1"/>
<dbReference type="RefSeq" id="NP_001020099.1">
    <property type="nucleotide sequence ID" value="NM_001024928.2"/>
</dbReference>
<dbReference type="RefSeq" id="XP_006540216.1">
    <property type="nucleotide sequence ID" value="XM_006540153.3"/>
</dbReference>
<dbReference type="RefSeq" id="XP_006540217.1">
    <property type="nucleotide sequence ID" value="XM_006540154.2"/>
</dbReference>
<dbReference type="RefSeq" id="XP_006540218.1">
    <property type="nucleotide sequence ID" value="XM_006540155.1"/>
</dbReference>
<dbReference type="RefSeq" id="XP_006540219.1">
    <property type="nucleotide sequence ID" value="XM_006540156.3"/>
</dbReference>
<dbReference type="SMR" id="Q2TL60"/>
<dbReference type="BioGRID" id="239298">
    <property type="interactions" value="51"/>
</dbReference>
<dbReference type="FunCoup" id="Q2TL60">
    <property type="interactions" value="19"/>
</dbReference>
<dbReference type="STRING" id="10090.ENSMUSP00000128658"/>
<dbReference type="iPTMnet" id="Q2TL60"/>
<dbReference type="PhosphoSitePlus" id="Q2TL60"/>
<dbReference type="PaxDb" id="10090-ENSMUSP00000083507"/>
<dbReference type="PeptideAtlas" id="Q2TL60"/>
<dbReference type="Antibodypedia" id="33211">
    <property type="antibodies" value="105 antibodies from 19 providers"/>
</dbReference>
<dbReference type="DNASU" id="384763"/>
<dbReference type="Ensembl" id="ENSMUST00000086327.12">
    <property type="protein sequence ID" value="ENSMUSP00000083507.6"/>
    <property type="gene ID" value="ENSMUSG00000054893.16"/>
</dbReference>
<dbReference type="Ensembl" id="ENSMUST00000108562.2">
    <property type="protein sequence ID" value="ENSMUSP00000104202.2"/>
    <property type="gene ID" value="ENSMUSG00000054893.16"/>
</dbReference>
<dbReference type="Ensembl" id="ENSMUST00000170776.8">
    <property type="protein sequence ID" value="ENSMUSP00000128658.2"/>
    <property type="gene ID" value="ENSMUSG00000054893.16"/>
</dbReference>
<dbReference type="GeneID" id="384763"/>
<dbReference type="KEGG" id="mmu:384763"/>
<dbReference type="UCSC" id="uc009fbb.1">
    <property type="organism name" value="mouse"/>
</dbReference>
<dbReference type="AGR" id="MGI:2442757"/>
<dbReference type="CTD" id="384763"/>
<dbReference type="MGI" id="MGI:2442757">
    <property type="gene designation" value="Zfp667"/>
</dbReference>
<dbReference type="VEuPathDB" id="HostDB:ENSMUSG00000054893"/>
<dbReference type="eggNOG" id="KOG1721">
    <property type="taxonomic scope" value="Eukaryota"/>
</dbReference>
<dbReference type="GeneTree" id="ENSGT00390000021477"/>
<dbReference type="HOGENOM" id="CLU_002678_57_1_1"/>
<dbReference type="InParanoid" id="Q2TL60"/>
<dbReference type="OMA" id="RIHMSKK"/>
<dbReference type="OrthoDB" id="8922241at2759"/>
<dbReference type="PhylomeDB" id="Q2TL60"/>
<dbReference type="TreeFam" id="TF341817"/>
<dbReference type="Reactome" id="R-MMU-212436">
    <property type="pathway name" value="Generic Transcription Pathway"/>
</dbReference>
<dbReference type="BioGRID-ORCS" id="384763">
    <property type="hits" value="2 hits in 76 CRISPR screens"/>
</dbReference>
<dbReference type="ChiTaRS" id="Zfp667">
    <property type="organism name" value="mouse"/>
</dbReference>
<dbReference type="PRO" id="PR:Q2TL60"/>
<dbReference type="Proteomes" id="UP000000589">
    <property type="component" value="Chromosome 7"/>
</dbReference>
<dbReference type="RNAct" id="Q2TL60">
    <property type="molecule type" value="protein"/>
</dbReference>
<dbReference type="Bgee" id="ENSMUSG00000054893">
    <property type="expression patterns" value="Expressed in otolith organ and 218 other cell types or tissues"/>
</dbReference>
<dbReference type="ExpressionAtlas" id="Q2TL60">
    <property type="expression patterns" value="baseline and differential"/>
</dbReference>
<dbReference type="GO" id="GO:0005634">
    <property type="term" value="C:nucleus"/>
    <property type="evidence" value="ECO:0007669"/>
    <property type="project" value="UniProtKB-SubCell"/>
</dbReference>
<dbReference type="GO" id="GO:0003677">
    <property type="term" value="F:DNA binding"/>
    <property type="evidence" value="ECO:0007669"/>
    <property type="project" value="UniProtKB-KW"/>
</dbReference>
<dbReference type="GO" id="GO:0008270">
    <property type="term" value="F:zinc ion binding"/>
    <property type="evidence" value="ECO:0007669"/>
    <property type="project" value="UniProtKB-KW"/>
</dbReference>
<dbReference type="GO" id="GO:0006355">
    <property type="term" value="P:regulation of DNA-templated transcription"/>
    <property type="evidence" value="ECO:0007669"/>
    <property type="project" value="InterPro"/>
</dbReference>
<dbReference type="CDD" id="cd07765">
    <property type="entry name" value="KRAB_A-box"/>
    <property type="match status" value="1"/>
</dbReference>
<dbReference type="FunFam" id="3.30.160.60:FF:000295">
    <property type="entry name" value="zinc finger protein 19"/>
    <property type="match status" value="1"/>
</dbReference>
<dbReference type="FunFam" id="3.30.160.60:FF:000003">
    <property type="entry name" value="Zinc finger protein 3 homolog"/>
    <property type="match status" value="1"/>
</dbReference>
<dbReference type="FunFam" id="3.30.160.60:FF:000475">
    <property type="entry name" value="zinc finger protein 32 isoform X1"/>
    <property type="match status" value="1"/>
</dbReference>
<dbReference type="FunFam" id="3.30.160.60:FF:000016">
    <property type="entry name" value="zinc finger protein 37 homolog"/>
    <property type="match status" value="1"/>
</dbReference>
<dbReference type="FunFam" id="3.30.160.60:FF:001498">
    <property type="entry name" value="Zinc finger protein 404"/>
    <property type="match status" value="1"/>
</dbReference>
<dbReference type="FunFam" id="3.30.160.60:FF:002090">
    <property type="entry name" value="Zinc finger protein 473"/>
    <property type="match status" value="1"/>
</dbReference>
<dbReference type="FunFam" id="3.30.160.60:FF:000051">
    <property type="entry name" value="zinc finger protein 585A"/>
    <property type="match status" value="1"/>
</dbReference>
<dbReference type="FunFam" id="3.30.160.60:FF:001803">
    <property type="entry name" value="Zinc finger protein 667"/>
    <property type="match status" value="2"/>
</dbReference>
<dbReference type="FunFam" id="3.30.160.60:FF:000710">
    <property type="entry name" value="Zinc finger protein 768"/>
    <property type="match status" value="1"/>
</dbReference>
<dbReference type="Gene3D" id="6.10.140.140">
    <property type="match status" value="1"/>
</dbReference>
<dbReference type="Gene3D" id="3.30.160.60">
    <property type="entry name" value="Classic Zinc Finger"/>
    <property type="match status" value="14"/>
</dbReference>
<dbReference type="InterPro" id="IPR001909">
    <property type="entry name" value="KRAB"/>
</dbReference>
<dbReference type="InterPro" id="IPR036051">
    <property type="entry name" value="KRAB_dom_sf"/>
</dbReference>
<dbReference type="InterPro" id="IPR036236">
    <property type="entry name" value="Znf_C2H2_sf"/>
</dbReference>
<dbReference type="InterPro" id="IPR013087">
    <property type="entry name" value="Znf_C2H2_type"/>
</dbReference>
<dbReference type="PANTHER" id="PTHR24381">
    <property type="entry name" value="ZINC FINGER PROTEIN"/>
    <property type="match status" value="1"/>
</dbReference>
<dbReference type="PANTHER" id="PTHR24381:SF366">
    <property type="entry name" value="ZINC FINGER PROTEIN 383"/>
    <property type="match status" value="1"/>
</dbReference>
<dbReference type="Pfam" id="PF01352">
    <property type="entry name" value="KRAB"/>
    <property type="match status" value="1"/>
</dbReference>
<dbReference type="Pfam" id="PF00096">
    <property type="entry name" value="zf-C2H2"/>
    <property type="match status" value="12"/>
</dbReference>
<dbReference type="SMART" id="SM00349">
    <property type="entry name" value="KRAB"/>
    <property type="match status" value="1"/>
</dbReference>
<dbReference type="SMART" id="SM00355">
    <property type="entry name" value="ZnF_C2H2"/>
    <property type="match status" value="14"/>
</dbReference>
<dbReference type="SUPFAM" id="SSF57667">
    <property type="entry name" value="beta-beta-alpha zinc fingers"/>
    <property type="match status" value="9"/>
</dbReference>
<dbReference type="SUPFAM" id="SSF109640">
    <property type="entry name" value="KRAB domain (Kruppel-associated box)"/>
    <property type="match status" value="1"/>
</dbReference>
<dbReference type="PROSITE" id="PS50805">
    <property type="entry name" value="KRAB"/>
    <property type="match status" value="1"/>
</dbReference>
<dbReference type="PROSITE" id="PS00028">
    <property type="entry name" value="ZINC_FINGER_C2H2_1"/>
    <property type="match status" value="14"/>
</dbReference>
<dbReference type="PROSITE" id="PS50157">
    <property type="entry name" value="ZINC_FINGER_C2H2_2"/>
    <property type="match status" value="14"/>
</dbReference>
<reference key="1">
    <citation type="journal article" date="2004" name="Sheng Wu Hua Xue Yu Sheng Wu Wu Li Jin Zhan">
        <title>Cloning and characteration of a new gene Mip1 up-regulated during myocardial ischemia-reperfusion.</title>
        <authorList>
            <person name="Yuan C."/>
            <person name="Zhang H."/>
            <person name="Liu Y."/>
            <person name="Wang Q."/>
            <person name="Xiao X."/>
        </authorList>
    </citation>
    <scope>NUCLEOTIDE SEQUENCE [MRNA]</scope>
</reference>
<reference key="2">
    <citation type="journal article" date="2004" name="Genome Res.">
        <title>The status, quality, and expansion of the NIH full-length cDNA project: the Mammalian Gene Collection (MGC).</title>
        <authorList>
            <consortium name="The MGC Project Team"/>
        </authorList>
    </citation>
    <scope>NUCLEOTIDE SEQUENCE [LARGE SCALE MRNA]</scope>
    <source>
        <tissue>Brain</tissue>
    </source>
</reference>
<organism>
    <name type="scientific">Mus musculus</name>
    <name type="common">Mouse</name>
    <dbReference type="NCBI Taxonomy" id="10090"/>
    <lineage>
        <taxon>Eukaryota</taxon>
        <taxon>Metazoa</taxon>
        <taxon>Chordata</taxon>
        <taxon>Craniata</taxon>
        <taxon>Vertebrata</taxon>
        <taxon>Euteleostomi</taxon>
        <taxon>Mammalia</taxon>
        <taxon>Eutheria</taxon>
        <taxon>Euarchontoglires</taxon>
        <taxon>Glires</taxon>
        <taxon>Rodentia</taxon>
        <taxon>Myomorpha</taxon>
        <taxon>Muroidea</taxon>
        <taxon>Muridae</taxon>
        <taxon>Murinae</taxon>
        <taxon>Mus</taxon>
        <taxon>Mus</taxon>
    </lineage>
</organism>
<sequence>MPAVRGKSKSKAPVTFGDLAIYFSQEEWEWLSPMQKDLYEDVMLENYHNLVSVGLACRRPNIIALLEKGKAPWVIEPSRRRWGPESGSKYETKKLPPNSCHKSGPSICEKPTSSQQKVPTEKAKHNKSSVPSKSKKEHSGKKSLKCNLCGKTFFRSLSLKLHQDFHTGERSYECSTCRHVFRQILSLILHQRVHNWNKSYECDKCGDIFNKKLTLMIHRRIHNGKESFHHEKASDSCPSLSLHRNNHTTDSVHQCRKCGKVFSRMSSLLLHKRSHNRKKIQKYNKYKRGFKKQPVLVHKRVCIGKKTHESKKALIQSARQKTCQSENPFMCGKCGKSFSRISALMLHQRIHTSGNPYKCDKCQKDFGRLSTLILHLRIHSGEKQFKCSKCEKVCSRLSSFIQHQKIHKRKKKLIACKECGKMFGGMKNLKVHLNIHSEEKPFKCNKCSKVFGRQSFLSEHQRIHTGEKPYQCEECGKAFSHRISLTRHKRIHSEDRPYECDLCGKAFSQSAHLAQHERIHTGEKPYACKICKKSFAQRISLILHERSHTGERPYECNECGKAFSSGSDLIRHQRSHSSEKPYECSKCGKAYSRSSSLIRHQSIHSEETP</sequence>
<comment type="function">
    <text>May be involved in transcriptional regulation.</text>
</comment>
<comment type="subcellular location">
    <subcellularLocation>
        <location evidence="4">Nucleus</location>
    </subcellularLocation>
</comment>
<comment type="similarity">
    <text evidence="4">Belongs to the krueppel C2H2-type zinc-finger protein family.</text>
</comment>
<evidence type="ECO:0000255" key="1">
    <source>
        <dbReference type="PROSITE-ProRule" id="PRU00042"/>
    </source>
</evidence>
<evidence type="ECO:0000255" key="2">
    <source>
        <dbReference type="PROSITE-ProRule" id="PRU00119"/>
    </source>
</evidence>
<evidence type="ECO:0000256" key="3">
    <source>
        <dbReference type="SAM" id="MobiDB-lite"/>
    </source>
</evidence>
<evidence type="ECO:0000305" key="4"/>